<accession>P0C8C1</accession>
<name>STX3B_SCOAN</name>
<evidence type="ECO:0000269" key="1">
    <source>
    </source>
</evidence>
<evidence type="ECO:0000305" key="2"/>
<evidence type="ECO:0000305" key="3">
    <source>
    </source>
</evidence>
<dbReference type="GO" id="GO:0005576">
    <property type="term" value="C:extracellular region"/>
    <property type="evidence" value="ECO:0007669"/>
    <property type="project" value="UniProtKB-SubCell"/>
</dbReference>
<dbReference type="GO" id="GO:0090729">
    <property type="term" value="F:toxin activity"/>
    <property type="evidence" value="ECO:0007669"/>
    <property type="project" value="UniProtKB-KW"/>
</dbReference>
<comment type="subcellular location">
    <subcellularLocation>
        <location evidence="1">Secreted</location>
    </subcellularLocation>
</comment>
<comment type="tissue specificity">
    <text evidence="3">Expressed by the venom gland.</text>
</comment>
<comment type="mass spectrometry" mass="5920.47" method="Electrospray" evidence="1"/>
<comment type="similarity">
    <text evidence="2">Belongs to the scolopendra toxin 3 family.</text>
</comment>
<proteinExistence type="evidence at protein level"/>
<sequence length="18" mass="2128">EQLIRKDVXHXEXFAXXS</sequence>
<reference key="1">
    <citation type="journal article" date="2007" name="Toxicon">
        <title>Venomic analyses of Scolopendra viridicornis nigra and Scolopendra angulata (Centipede, Scolopendromorpha): shedding light on venoms from a neglected group.</title>
        <authorList>
            <person name="Rates B."/>
            <person name="Bemquerer M.P."/>
            <person name="Richardson M."/>
            <person name="Borges M.H."/>
            <person name="Morales R.A.V."/>
            <person name="De Lima M.E."/>
            <person name="Pimenta A.M.C."/>
        </authorList>
    </citation>
    <scope>PROTEIN SEQUENCE</scope>
    <scope>MASS SPECTROMETRY</scope>
    <scope>SUBCELLULAR LOCATION</scope>
    <source>
        <tissue>Venom</tissue>
    </source>
</reference>
<keyword id="KW-0903">Direct protein sequencing</keyword>
<keyword id="KW-0528">Neurotoxin</keyword>
<keyword id="KW-0964">Secreted</keyword>
<keyword id="KW-0800">Toxin</keyword>
<feature type="chain" id="PRO_0000352857" description="Scolopendra 5920.47 Da toxin">
    <location>
        <begin position="1"/>
        <end position="18" status="greater than"/>
    </location>
</feature>
<feature type="non-terminal residue">
    <location>
        <position position="18"/>
    </location>
</feature>
<organism>
    <name type="scientific">Scolopendra angulata</name>
    <name type="common">Barbados giant red centipede</name>
    <dbReference type="NCBI Taxonomy" id="486498"/>
    <lineage>
        <taxon>Eukaryota</taxon>
        <taxon>Metazoa</taxon>
        <taxon>Ecdysozoa</taxon>
        <taxon>Arthropoda</taxon>
        <taxon>Myriapoda</taxon>
        <taxon>Chilopoda</taxon>
        <taxon>Pleurostigmophora</taxon>
        <taxon>Scolopendromorpha</taxon>
        <taxon>Scolopendridae</taxon>
        <taxon>Scolopendra</taxon>
    </lineage>
</organism>
<protein>
    <recommendedName>
        <fullName>Scolopendra 5920.47 Da toxin</fullName>
    </recommendedName>
</protein>